<dbReference type="EC" id="1.1.1.-" evidence="11"/>
<dbReference type="EMBL" id="KV878984">
    <property type="protein sequence ID" value="OJJ96978.1"/>
    <property type="molecule type" value="Genomic_DNA"/>
</dbReference>
<dbReference type="RefSeq" id="XP_020053318.1">
    <property type="nucleotide sequence ID" value="XM_020199998.1"/>
</dbReference>
<dbReference type="SMR" id="A0A1L9WLE6"/>
<dbReference type="GeneID" id="30973812"/>
<dbReference type="VEuPathDB" id="FungiDB:ASPACDRAFT_33906"/>
<dbReference type="OMA" id="NIYLVCA"/>
<dbReference type="OrthoDB" id="7289984at2759"/>
<dbReference type="Proteomes" id="UP000184546">
    <property type="component" value="Unassembled WGS sequence"/>
</dbReference>
<dbReference type="GO" id="GO:0016616">
    <property type="term" value="F:oxidoreductase activity, acting on the CH-OH group of donors, NAD or NADP as acceptor"/>
    <property type="evidence" value="ECO:0007669"/>
    <property type="project" value="TreeGrafter"/>
</dbReference>
<dbReference type="GO" id="GO:0044550">
    <property type="term" value="P:secondary metabolite biosynthetic process"/>
    <property type="evidence" value="ECO:0007669"/>
    <property type="project" value="UniProtKB-ARBA"/>
</dbReference>
<dbReference type="Gene3D" id="3.40.50.720">
    <property type="entry name" value="NAD(P)-binding Rossmann-like Domain"/>
    <property type="match status" value="1"/>
</dbReference>
<dbReference type="InterPro" id="IPR036291">
    <property type="entry name" value="NAD(P)-bd_dom_sf"/>
</dbReference>
<dbReference type="InterPro" id="IPR020904">
    <property type="entry name" value="Sc_DH/Rdtase_CS"/>
</dbReference>
<dbReference type="InterPro" id="IPR052184">
    <property type="entry name" value="SDR_enzymes"/>
</dbReference>
<dbReference type="InterPro" id="IPR002347">
    <property type="entry name" value="SDR_fam"/>
</dbReference>
<dbReference type="PANTHER" id="PTHR45458:SF3">
    <property type="entry name" value="CHAIN DEHYDROGENASE (ATSC), PUTATIVE-RELATED"/>
    <property type="match status" value="1"/>
</dbReference>
<dbReference type="PANTHER" id="PTHR45458">
    <property type="entry name" value="SHORT-CHAIN DEHYDROGENASE/REDUCTASE SDR"/>
    <property type="match status" value="1"/>
</dbReference>
<dbReference type="Pfam" id="PF00106">
    <property type="entry name" value="adh_short"/>
    <property type="match status" value="1"/>
</dbReference>
<dbReference type="PRINTS" id="PR00081">
    <property type="entry name" value="GDHRDH"/>
</dbReference>
<dbReference type="SUPFAM" id="SSF51735">
    <property type="entry name" value="NAD(P)-binding Rossmann-fold domains"/>
    <property type="match status" value="1"/>
</dbReference>
<dbReference type="PROSITE" id="PS00061">
    <property type="entry name" value="ADH_SHORT"/>
    <property type="match status" value="1"/>
</dbReference>
<proteinExistence type="evidence at protein level"/>
<reference key="1">
    <citation type="journal article" date="2017" name="Genome Biol.">
        <title>Comparative genomics reveals high biological diversity and specific adaptations in the industrially and medically important fungal genus Aspergillus.</title>
        <authorList>
            <person name="de Vries R.P."/>
            <person name="Riley R."/>
            <person name="Wiebenga A."/>
            <person name="Aguilar-Osorio G."/>
            <person name="Amillis S."/>
            <person name="Uchima C.A."/>
            <person name="Anderluh G."/>
            <person name="Asadollahi M."/>
            <person name="Askin M."/>
            <person name="Barry K."/>
            <person name="Battaglia E."/>
            <person name="Bayram O."/>
            <person name="Benocci T."/>
            <person name="Braus-Stromeyer S.A."/>
            <person name="Caldana C."/>
            <person name="Canovas D."/>
            <person name="Cerqueira G.C."/>
            <person name="Chen F."/>
            <person name="Chen W."/>
            <person name="Choi C."/>
            <person name="Clum A."/>
            <person name="Dos Santos R.A."/>
            <person name="Damasio A.R."/>
            <person name="Diallinas G."/>
            <person name="Emri T."/>
            <person name="Fekete E."/>
            <person name="Flipphi M."/>
            <person name="Freyberg S."/>
            <person name="Gallo A."/>
            <person name="Gournas C."/>
            <person name="Habgood R."/>
            <person name="Hainaut M."/>
            <person name="Harispe M.L."/>
            <person name="Henrissat B."/>
            <person name="Hilden K.S."/>
            <person name="Hope R."/>
            <person name="Hossain A."/>
            <person name="Karabika E."/>
            <person name="Karaffa L."/>
            <person name="Karanyi Z."/>
            <person name="Krasevec N."/>
            <person name="Kuo A."/>
            <person name="Kusch H."/>
            <person name="LaButti K."/>
            <person name="Lagendijk E.L."/>
            <person name="Lapidus A."/>
            <person name="Levasseur A."/>
            <person name="Lindquist E."/>
            <person name="Lipzen A."/>
            <person name="Logrieco A.F."/>
            <person name="MacCabe A."/>
            <person name="Maekelae M.R."/>
            <person name="Malavazi I."/>
            <person name="Melin P."/>
            <person name="Meyer V."/>
            <person name="Mielnichuk N."/>
            <person name="Miskei M."/>
            <person name="Molnar A.P."/>
            <person name="Mule G."/>
            <person name="Ngan C.Y."/>
            <person name="Orejas M."/>
            <person name="Orosz E."/>
            <person name="Ouedraogo J.P."/>
            <person name="Overkamp K.M."/>
            <person name="Park H.-S."/>
            <person name="Perrone G."/>
            <person name="Piumi F."/>
            <person name="Punt P.J."/>
            <person name="Ram A.F."/>
            <person name="Ramon A."/>
            <person name="Rauscher S."/>
            <person name="Record E."/>
            <person name="Riano-Pachon D.M."/>
            <person name="Robert V."/>
            <person name="Roehrig J."/>
            <person name="Ruller R."/>
            <person name="Salamov A."/>
            <person name="Salih N.S."/>
            <person name="Samson R.A."/>
            <person name="Sandor E."/>
            <person name="Sanguinetti M."/>
            <person name="Schuetze T."/>
            <person name="Sepcic K."/>
            <person name="Shelest E."/>
            <person name="Sherlock G."/>
            <person name="Sophianopoulou V."/>
            <person name="Squina F.M."/>
            <person name="Sun H."/>
            <person name="Susca A."/>
            <person name="Todd R.B."/>
            <person name="Tsang A."/>
            <person name="Unkles S.E."/>
            <person name="van de Wiele N."/>
            <person name="van Rossen-Uffink D."/>
            <person name="Oliveira J.V."/>
            <person name="Vesth T.C."/>
            <person name="Visser J."/>
            <person name="Yu J.-H."/>
            <person name="Zhou M."/>
            <person name="Andersen M.R."/>
            <person name="Archer D.B."/>
            <person name="Baker S.E."/>
            <person name="Benoit I."/>
            <person name="Brakhage A.A."/>
            <person name="Braus G.H."/>
            <person name="Fischer R."/>
            <person name="Frisvad J.C."/>
            <person name="Goldman G.H."/>
            <person name="Houbraken J."/>
            <person name="Oakley B."/>
            <person name="Pocsi I."/>
            <person name="Scazzocchio C."/>
            <person name="Seiboth B."/>
            <person name="vanKuyk P.A."/>
            <person name="Wortman J."/>
            <person name="Dyer P.S."/>
            <person name="Grigoriev I.V."/>
        </authorList>
    </citation>
    <scope>NUCLEOTIDE SEQUENCE [LARGE SCALE GENOMIC DNA]</scope>
    <source>
        <strain>ATCC 16872 / CBS 172.66 / WB 5094</strain>
    </source>
</reference>
<reference key="2">
    <citation type="journal article" date="2017" name="Neoplasma">
        <title>Secalonic acid- F inhibited cell growth more effectively than 5-fluorouracil on hepatocellular carcinoma in vitro and in vivo.</title>
        <authorList>
            <person name="Gao X."/>
            <person name="Sun H.L."/>
            <person name="Liu D.S."/>
            <person name="Zhang J.R."/>
            <person name="Zhang J."/>
            <person name="Yan M.M."/>
            <person name="Pan X.H."/>
        </authorList>
    </citation>
    <scope>BIOTECHNOLOGY</scope>
</reference>
<reference key="3">
    <citation type="journal article" date="2018" name="Curr. Microbiol.">
        <title>Secondary Metabolites and Their Biological Activity from Aspergillus aculeatus KKU-CT2.</title>
        <authorList>
            <person name="Yodsing N."/>
            <person name="Lekphrom R."/>
            <person name="Sangsopha W."/>
            <person name="Aimi T."/>
            <person name="Boonlue S."/>
        </authorList>
    </citation>
    <scope>BIOTECHNOLOGY</scope>
</reference>
<reference key="4">
    <citation type="journal article" date="2019" name="Chem. Sci.">
        <title>Structure revision of cryptosporioptides and determination of the genetic basis for dimeric xanthone biosynthesis in fungi.</title>
        <authorList>
            <person name="Greco C."/>
            <person name="de Mattos-Shipley K."/>
            <person name="Bailey A.M."/>
            <person name="Mulholland N.P."/>
            <person name="Vincent J.L."/>
            <person name="Willis C.L."/>
            <person name="Cox R.J."/>
            <person name="Simpson T.J."/>
        </authorList>
    </citation>
    <scope>IDENTIFICATION</scope>
    <scope>FUNCTION</scope>
</reference>
<reference key="5">
    <citation type="journal article" date="2019" name="Molecules">
        <title>Secalonic Acid-F, a Novel Mycotoxin, Represses the Progression of Hepatocellular Carcinoma via MARCH1 Regulation of the PI3K/AKT/beta-catenin Signaling Pathway.</title>
        <authorList>
            <person name="Xie L."/>
            <person name="Li M."/>
            <person name="Liu D."/>
            <person name="Wang X."/>
            <person name="Wang P."/>
            <person name="Dai H."/>
            <person name="Yang W."/>
            <person name="Liu W."/>
            <person name="Hu X."/>
            <person name="Zhao M."/>
        </authorList>
    </citation>
    <scope>BIOTECHNOLOGY</scope>
</reference>
<reference key="6">
    <citation type="journal article" date="2020" name="ACS Omega">
        <title>Discovery of a Secalonic Acid Derivative from Aspergillus aculeatus, an Endophyte of Rosa damascena Mill., Triggers Apoptosis in MDA-MB-231 Triple Negative Breast Cancer Cells.</title>
        <authorList>
            <person name="Farooq S."/>
            <person name="Qayum A."/>
            <person name="Nalli Y."/>
            <person name="Lauro G."/>
            <person name="Chini M.G."/>
            <person name="Bifulco G."/>
            <person name="Chaubey A."/>
            <person name="Singh S.K."/>
            <person name="Riyaz-Ul-Hassan S."/>
            <person name="Ali A."/>
        </authorList>
    </citation>
    <scope>BIOTECHNOLOGY</scope>
</reference>
<reference key="7">
    <citation type="journal article" date="2021" name="J. Nat. Prod.">
        <title>Heterologous biosynthesis of tetrahydroxanthone dimers: determination of key factors for selective or divergent synthesis.</title>
        <authorList>
            <person name="Wei X."/>
            <person name="Chen X."/>
            <person name="Chen L."/>
            <person name="Yan D."/>
            <person name="Wang W.G."/>
            <person name="Matsuda Y."/>
        </authorList>
    </citation>
    <scope>FUNCTION</scope>
    <scope>CATALYTIC ACTIVITY</scope>
    <scope>PATHWAY</scope>
</reference>
<evidence type="ECO:0000250" key="1">
    <source>
        <dbReference type="UniProtKB" id="L0E2Z4"/>
    </source>
</evidence>
<evidence type="ECO:0000250" key="2">
    <source>
        <dbReference type="UniProtKB" id="O93868"/>
    </source>
</evidence>
<evidence type="ECO:0000269" key="3">
    <source>
    </source>
</evidence>
<evidence type="ECO:0000269" key="4">
    <source>
    </source>
</evidence>
<evidence type="ECO:0000269" key="5">
    <source>
    </source>
</evidence>
<evidence type="ECO:0000269" key="6">
    <source>
    </source>
</evidence>
<evidence type="ECO:0000269" key="7">
    <source>
    </source>
</evidence>
<evidence type="ECO:0000269" key="8">
    <source>
    </source>
</evidence>
<evidence type="ECO:0000303" key="9">
    <source>
    </source>
</evidence>
<evidence type="ECO:0000305" key="10"/>
<evidence type="ECO:0000305" key="11">
    <source>
    </source>
</evidence>
<evidence type="ECO:0000305" key="12">
    <source>
    </source>
</evidence>
<gene>
    <name evidence="9" type="primary">AacuF</name>
    <name type="ORF">ASPACDRAFT_33906</name>
</gene>
<feature type="chain" id="PRO_0000453450" description="Short-chain dehydrogenase/reductase AacuF">
    <location>
        <begin position="1"/>
        <end position="266"/>
    </location>
</feature>
<feature type="active site" description="Proton donor" evidence="2">
    <location>
        <position position="145"/>
    </location>
</feature>
<feature type="active site" description="Proton donor" evidence="2">
    <location>
        <position position="164"/>
    </location>
</feature>
<feature type="active site" description="Lowers pKa of active site Tyr" evidence="2">
    <location>
        <position position="168"/>
    </location>
</feature>
<feature type="binding site" evidence="1">
    <location>
        <position position="13"/>
    </location>
    <ligand>
        <name>NADP(+)</name>
        <dbReference type="ChEBI" id="CHEBI:58349"/>
    </ligand>
</feature>
<feature type="binding site" evidence="1">
    <location>
        <position position="57"/>
    </location>
    <ligand>
        <name>NADP(+)</name>
        <dbReference type="ChEBI" id="CHEBI:58349"/>
    </ligand>
</feature>
<feature type="binding site" evidence="2">
    <location>
        <position position="85"/>
    </location>
    <ligand>
        <name>NADP(+)</name>
        <dbReference type="ChEBI" id="CHEBI:58349"/>
    </ligand>
</feature>
<feature type="binding site" evidence="2">
    <location>
        <position position="164"/>
    </location>
    <ligand>
        <name>NADP(+)</name>
        <dbReference type="ChEBI" id="CHEBI:58349"/>
    </ligand>
</feature>
<feature type="binding site" evidence="2">
    <location>
        <position position="168"/>
    </location>
    <ligand>
        <name>NADP(+)</name>
        <dbReference type="ChEBI" id="CHEBI:58349"/>
    </ligand>
</feature>
<feature type="binding site" evidence="2">
    <location>
        <position position="198"/>
    </location>
    <ligand>
        <name>NADP(+)</name>
        <dbReference type="ChEBI" id="CHEBI:58349"/>
    </ligand>
</feature>
<accession>A0A1L9WLE6</accession>
<name>AACUF_ASPA1</name>
<keyword id="KW-0521">NADP</keyword>
<keyword id="KW-0560">Oxidoreductase</keyword>
<keyword id="KW-1185">Reference proteome</keyword>
<sequence>MPSYLITGGSRGLGYAWLKHLSSNPQNTVIGLVRDKSSPHSHPLADRLTNVHHVCADITDPKALQTAAEQVRAITGGGLDVLINNAAILTPTSAFTPITDLSPGVLERDILQSCRTNVVGVAHTVNAFLPLIRKGRAKKVITISSLLADPDLVRNFALDNAMPYAISKAAANLLMAKYHASLGATEGILFMAISPGAVSKPDTAPSEGEAEGRRRMAAKLQAYAPHFSRPMTMEESVRRQLEVIENATVELHGGAFVSHLGNKQWL</sequence>
<organism>
    <name type="scientific">Aspergillus aculeatus (strain ATCC 16872 / CBS 172.66 / WB 5094)</name>
    <dbReference type="NCBI Taxonomy" id="690307"/>
    <lineage>
        <taxon>Eukaryota</taxon>
        <taxon>Fungi</taxon>
        <taxon>Dikarya</taxon>
        <taxon>Ascomycota</taxon>
        <taxon>Pezizomycotina</taxon>
        <taxon>Eurotiomycetes</taxon>
        <taxon>Eurotiomycetidae</taxon>
        <taxon>Eurotiales</taxon>
        <taxon>Aspergillaceae</taxon>
        <taxon>Aspergillus</taxon>
        <taxon>Aspergillus subgen. Circumdati</taxon>
    </lineage>
</organism>
<protein>
    <recommendedName>
        <fullName evidence="9">Short-chain dehydrogenase/reductase AacuF</fullName>
        <shortName evidence="9">SDR AacuF</shortName>
        <ecNumber evidence="11">1.1.1.-</ecNumber>
    </recommendedName>
    <alternativeName>
        <fullName evidence="9">Secalonic acid biosynthesis cluster protein F</fullName>
    </alternativeName>
</protein>
<comment type="function">
    <text evidence="6 8 12">Short-chain dehydrogenase/reductase; part of the gene cluster that mediates the biosynthesis of the tetrahydroxanthone dimer secalonic acid D (PubMed:30996871, PubMed:33891392). The pathway begins with the synthesis of atrochrysone thioester by the polyketide synthase AacuL (Probable). The atrochrysone carboxyl ACP thioesterase AacuM then breaks the thioester bond and releases the atrochrysone carboxylic acid from AacuL (Probable). Atrochrysone carboxylic acid is decarboxylated by the decarboxylase AacuI, and oxidized by the anthrone oxygenase AacuG to yield emodin (Probable). Emodin is then reduced to emodin hydroquinone by a yet unidentified oxidoreductase (Probable). A-ring reduction by the short chain dehydrogenase AacuN, dehydration by the scytalone dehydratase-like protein AacuK and probable spontaneous re-oxidation, results in overall deoxygenation to chrysophanol (PubMed:33891392). Baeyer-Villiger oxidation by the Baeyer-Villiger monooxygenase (BVMO) AacuH then yields monodictyphenone (PubMed:33891392). Monodictyphenone is transformed into compounds with the tetrahydroxanthone skeleton via methylesterification by the methyltransferase AacuQ, followed by the action of the flavin-dependent monooxygenase AacuC, the isomerase AacuP, and the short chain dehydrogenase/reductase AacuF or AacuD (PubMed:33891392). AacuF and AacuD should accept the same compound as a substrate but perform the ketoreduction with a different stereoselectivity, thus yielding blennolides B and A, respectively (PubMed:33891392). In the final step of the biosynthesis, the cytochrome P450 monooxygenase AacuE accepts blennolide B and/or blennolide A to conduct the dimerization reaction to furnish the tetrahydroxanthone dimers, secalonic acids D, B, and F (PubMed:33891392).</text>
</comment>
<comment type="pathway">
    <text evidence="8">Secondary metabolite biosynthesis.</text>
</comment>
<comment type="biotechnology">
    <text evidence="3 4 5 7">Secalonic acids show unprecedented anticancer activities against various human cancer cells and might be interesting for further derivatization, targeting diseases such as cancer.</text>
</comment>
<comment type="similarity">
    <text evidence="10">Belongs to the short-chain dehydrogenases/reductases (SDR) family.</text>
</comment>